<gene>
    <name type="primary">Prkar2b</name>
</gene>
<dbReference type="EMBL" id="M12492">
    <property type="protein sequence ID" value="AAA42047.1"/>
    <property type="molecule type" value="mRNA"/>
</dbReference>
<dbReference type="PIR" id="A28893">
    <property type="entry name" value="OKRTR2"/>
</dbReference>
<dbReference type="RefSeq" id="NP_001025191.1">
    <property type="nucleotide sequence ID" value="NM_001030020.1"/>
</dbReference>
<dbReference type="PDB" id="1CX4">
    <property type="method" value="X-ray"/>
    <property type="resolution" value="2.45 A"/>
    <property type="chains" value="A=112-416"/>
</dbReference>
<dbReference type="PDB" id="3IDB">
    <property type="method" value="X-ray"/>
    <property type="resolution" value="1.62 A"/>
    <property type="chains" value="B=108-268"/>
</dbReference>
<dbReference type="PDB" id="3IDC">
    <property type="method" value="X-ray"/>
    <property type="resolution" value="2.70 A"/>
    <property type="chains" value="B=102-265"/>
</dbReference>
<dbReference type="PDB" id="4JVA">
    <property type="method" value="X-ray"/>
    <property type="resolution" value="2.50 A"/>
    <property type="chains" value="A=112-416"/>
</dbReference>
<dbReference type="PDB" id="6WJF">
    <property type="method" value="EM"/>
    <property type="resolution" value="7.50 A"/>
    <property type="chains" value="C/D=1-416"/>
</dbReference>
<dbReference type="PDB" id="6WJG">
    <property type="method" value="EM"/>
    <property type="resolution" value="6.20 A"/>
    <property type="chains" value="C/D=1-416"/>
</dbReference>
<dbReference type="PDBsum" id="1CX4"/>
<dbReference type="PDBsum" id="3IDB"/>
<dbReference type="PDBsum" id="3IDC"/>
<dbReference type="PDBsum" id="4JVA"/>
<dbReference type="PDBsum" id="6WJF"/>
<dbReference type="PDBsum" id="6WJG"/>
<dbReference type="EMDB" id="EMD-21692"/>
<dbReference type="EMDB" id="EMD-21693"/>
<dbReference type="SMR" id="P12369"/>
<dbReference type="BioGRID" id="246811">
    <property type="interactions" value="2"/>
</dbReference>
<dbReference type="CORUM" id="P12369"/>
<dbReference type="DIP" id="DIP-61323N"/>
<dbReference type="FunCoup" id="P12369">
    <property type="interactions" value="1954"/>
</dbReference>
<dbReference type="IntAct" id="P12369">
    <property type="interactions" value="3"/>
</dbReference>
<dbReference type="STRING" id="10116.ENSRNOP00000012415"/>
<dbReference type="GuidetoPHARMACOLOGY" id="1475"/>
<dbReference type="GlyGen" id="P12369">
    <property type="glycosylation" value="1 site"/>
</dbReference>
<dbReference type="iPTMnet" id="P12369"/>
<dbReference type="PhosphoSitePlus" id="P12369"/>
<dbReference type="jPOST" id="P12369"/>
<dbReference type="PaxDb" id="10116-ENSRNOP00000012415"/>
<dbReference type="Ensembl" id="ENSRNOT00000012415.7">
    <property type="protein sequence ID" value="ENSRNOP00000012415.6"/>
    <property type="gene ID" value="ENSRNOG00000009079.7"/>
</dbReference>
<dbReference type="GeneID" id="24679"/>
<dbReference type="KEGG" id="rno:24679"/>
<dbReference type="UCSC" id="RGD:3394">
    <property type="organism name" value="rat"/>
</dbReference>
<dbReference type="AGR" id="RGD:3394"/>
<dbReference type="CTD" id="5577"/>
<dbReference type="RGD" id="3394">
    <property type="gene designation" value="Prkar2b"/>
</dbReference>
<dbReference type="eggNOG" id="KOG1113">
    <property type="taxonomic scope" value="Eukaryota"/>
</dbReference>
<dbReference type="GeneTree" id="ENSGT00940000158160"/>
<dbReference type="HOGENOM" id="CLU_018310_2_0_1"/>
<dbReference type="InParanoid" id="P12369"/>
<dbReference type="OMA" id="WSPPHHP"/>
<dbReference type="OrthoDB" id="417078at2759"/>
<dbReference type="PhylomeDB" id="P12369"/>
<dbReference type="TreeFam" id="TF314920"/>
<dbReference type="Reactome" id="R-RNO-163615">
    <property type="pathway name" value="PKA activation"/>
</dbReference>
<dbReference type="Reactome" id="R-RNO-164378">
    <property type="pathway name" value="PKA activation in glucagon signalling"/>
</dbReference>
<dbReference type="Reactome" id="R-RNO-180024">
    <property type="pathway name" value="DARPP-32 events"/>
</dbReference>
<dbReference type="Reactome" id="R-RNO-2565942">
    <property type="pathway name" value="Regulation of PLK1 Activity at G2/M Transition"/>
</dbReference>
<dbReference type="Reactome" id="R-RNO-380259">
    <property type="pathway name" value="Loss of Nlp from mitotic centrosomes"/>
</dbReference>
<dbReference type="Reactome" id="R-RNO-380270">
    <property type="pathway name" value="Recruitment of mitotic centrosome proteins and complexes"/>
</dbReference>
<dbReference type="Reactome" id="R-RNO-380284">
    <property type="pathway name" value="Loss of proteins required for interphase microtubule organization from the centrosome"/>
</dbReference>
<dbReference type="Reactome" id="R-RNO-380320">
    <property type="pathway name" value="Recruitment of NuMA to mitotic centrosomes"/>
</dbReference>
<dbReference type="Reactome" id="R-RNO-432040">
    <property type="pathway name" value="Vasopressin regulates renal water homeostasis via Aquaporins"/>
</dbReference>
<dbReference type="Reactome" id="R-RNO-442720">
    <property type="pathway name" value="CREB1 phosphorylation through the activation of Adenylate Cyclase"/>
</dbReference>
<dbReference type="Reactome" id="R-RNO-5610787">
    <property type="pathway name" value="Hedgehog 'off' state"/>
</dbReference>
<dbReference type="Reactome" id="R-RNO-5620912">
    <property type="pathway name" value="Anchoring of the basal body to the plasma membrane"/>
</dbReference>
<dbReference type="Reactome" id="R-RNO-8854518">
    <property type="pathway name" value="AURKA Activation by TPX2"/>
</dbReference>
<dbReference type="Reactome" id="R-RNO-9634597">
    <property type="pathway name" value="GPER1 signaling"/>
</dbReference>
<dbReference type="Reactome" id="R-RNO-983231">
    <property type="pathway name" value="Factors involved in megakaryocyte development and platelet production"/>
</dbReference>
<dbReference type="Reactome" id="R-RNO-9856530">
    <property type="pathway name" value="High laminar flow shear stress activates signaling by PIEZO1 and PECAM1:CDH5:KDR in endothelial cells"/>
</dbReference>
<dbReference type="EvolutionaryTrace" id="P12369"/>
<dbReference type="PRO" id="PR:P12369"/>
<dbReference type="Proteomes" id="UP000002494">
    <property type="component" value="Chromosome 6"/>
</dbReference>
<dbReference type="Bgee" id="ENSRNOG00000009079">
    <property type="expression patterns" value="Expressed in ovary and 19 other cell types or tissues"/>
</dbReference>
<dbReference type="ExpressionAtlas" id="P12369">
    <property type="expression patterns" value="baseline and differential"/>
</dbReference>
<dbReference type="GO" id="GO:0005952">
    <property type="term" value="C:cAMP-dependent protein kinase complex"/>
    <property type="evidence" value="ECO:0000314"/>
    <property type="project" value="RGD"/>
</dbReference>
<dbReference type="GO" id="GO:0005813">
    <property type="term" value="C:centrosome"/>
    <property type="evidence" value="ECO:0000266"/>
    <property type="project" value="RGD"/>
</dbReference>
<dbReference type="GO" id="GO:0097546">
    <property type="term" value="C:ciliary base"/>
    <property type="evidence" value="ECO:0000266"/>
    <property type="project" value="RGD"/>
</dbReference>
<dbReference type="GO" id="GO:0005737">
    <property type="term" value="C:cytoplasm"/>
    <property type="evidence" value="ECO:0000266"/>
    <property type="project" value="RGD"/>
</dbReference>
<dbReference type="GO" id="GO:0005829">
    <property type="term" value="C:cytosol"/>
    <property type="evidence" value="ECO:0000318"/>
    <property type="project" value="GO_Central"/>
</dbReference>
<dbReference type="GO" id="GO:0030425">
    <property type="term" value="C:dendrite"/>
    <property type="evidence" value="ECO:0000314"/>
    <property type="project" value="RGD"/>
</dbReference>
<dbReference type="GO" id="GO:0043198">
    <property type="term" value="C:dendritic shaft"/>
    <property type="evidence" value="ECO:0000250"/>
    <property type="project" value="ParkinsonsUK-UCL"/>
</dbReference>
<dbReference type="GO" id="GO:0043197">
    <property type="term" value="C:dendritic spine"/>
    <property type="evidence" value="ECO:0000250"/>
    <property type="project" value="ParkinsonsUK-UCL"/>
</dbReference>
<dbReference type="GO" id="GO:0098978">
    <property type="term" value="C:glutamatergic synapse"/>
    <property type="evidence" value="ECO:0000266"/>
    <property type="project" value="RGD"/>
</dbReference>
<dbReference type="GO" id="GO:0043025">
    <property type="term" value="C:neuronal cell body"/>
    <property type="evidence" value="ECO:0000314"/>
    <property type="project" value="RGD"/>
</dbReference>
<dbReference type="GO" id="GO:0048471">
    <property type="term" value="C:perinuclear region of cytoplasm"/>
    <property type="evidence" value="ECO:0000314"/>
    <property type="project" value="RGD"/>
</dbReference>
<dbReference type="GO" id="GO:0005886">
    <property type="term" value="C:plasma membrane"/>
    <property type="evidence" value="ECO:0000266"/>
    <property type="project" value="RGD"/>
</dbReference>
<dbReference type="GO" id="GO:0098794">
    <property type="term" value="C:postsynapse"/>
    <property type="evidence" value="ECO:0000266"/>
    <property type="project" value="RGD"/>
</dbReference>
<dbReference type="GO" id="GO:0030552">
    <property type="term" value="F:cAMP binding"/>
    <property type="evidence" value="ECO:0000314"/>
    <property type="project" value="RGD"/>
</dbReference>
<dbReference type="GO" id="GO:0004862">
    <property type="term" value="F:cAMP-dependent protein kinase inhibitor activity"/>
    <property type="evidence" value="ECO:0000266"/>
    <property type="project" value="RGD"/>
</dbReference>
<dbReference type="GO" id="GO:0008603">
    <property type="term" value="F:cAMP-dependent protein kinase regulator activity"/>
    <property type="evidence" value="ECO:0000314"/>
    <property type="project" value="RGD"/>
</dbReference>
<dbReference type="GO" id="GO:0019904">
    <property type="term" value="F:protein domain specific binding"/>
    <property type="evidence" value="ECO:0000314"/>
    <property type="project" value="RGD"/>
</dbReference>
<dbReference type="GO" id="GO:0034236">
    <property type="term" value="F:protein kinase A catalytic subunit binding"/>
    <property type="evidence" value="ECO:0000266"/>
    <property type="project" value="RGD"/>
</dbReference>
<dbReference type="GO" id="GO:0019901">
    <property type="term" value="F:protein kinase binding"/>
    <property type="evidence" value="ECO:0000266"/>
    <property type="project" value="RGD"/>
</dbReference>
<dbReference type="GO" id="GO:0031625">
    <property type="term" value="F:ubiquitin protein ligase binding"/>
    <property type="evidence" value="ECO:0000266"/>
    <property type="project" value="RGD"/>
</dbReference>
<dbReference type="GO" id="GO:0007189">
    <property type="term" value="P:adenylate cyclase-activating G protein-coupled receptor signaling pathway"/>
    <property type="evidence" value="ECO:0000318"/>
    <property type="project" value="GO_Central"/>
</dbReference>
<dbReference type="GO" id="GO:0006631">
    <property type="term" value="P:fatty acid metabolic process"/>
    <property type="evidence" value="ECO:0000266"/>
    <property type="project" value="RGD"/>
</dbReference>
<dbReference type="GO" id="GO:0007612">
    <property type="term" value="P:learning"/>
    <property type="evidence" value="ECO:0000266"/>
    <property type="project" value="RGD"/>
</dbReference>
<dbReference type="GO" id="GO:0050804">
    <property type="term" value="P:modulation of chemical synaptic transmission"/>
    <property type="evidence" value="ECO:0000266"/>
    <property type="project" value="RGD"/>
</dbReference>
<dbReference type="GO" id="GO:0141162">
    <property type="term" value="P:negative regulation of cAMP/PKA signal transduction"/>
    <property type="evidence" value="ECO:0000266"/>
    <property type="project" value="RGD"/>
</dbReference>
<dbReference type="GO" id="GO:0097332">
    <property type="term" value="P:response to antipsychotic drug"/>
    <property type="evidence" value="ECO:0000270"/>
    <property type="project" value="RGD"/>
</dbReference>
<dbReference type="CDD" id="cd00038">
    <property type="entry name" value="CAP_ED"/>
    <property type="match status" value="2"/>
</dbReference>
<dbReference type="CDD" id="cd12104">
    <property type="entry name" value="DD_RIIbeta_PKA"/>
    <property type="match status" value="1"/>
</dbReference>
<dbReference type="FunFam" id="2.60.120.10:FF:000017">
    <property type="entry name" value="cAMP-dependent protein kinase type II regulatory subunit"/>
    <property type="match status" value="1"/>
</dbReference>
<dbReference type="FunFam" id="1.20.890.10:FF:000002">
    <property type="entry name" value="cAMP-dependent protein kinase type II-alpha regulatory subunit"/>
    <property type="match status" value="1"/>
</dbReference>
<dbReference type="FunFam" id="2.60.120.10:FF:000027">
    <property type="entry name" value="Protein kinase cAMP-dependent type II regulatory subunit alpha"/>
    <property type="match status" value="1"/>
</dbReference>
<dbReference type="Gene3D" id="1.20.890.10">
    <property type="entry name" value="cAMP-dependent protein kinase regulatory subunit, dimerization-anchoring domain"/>
    <property type="match status" value="1"/>
</dbReference>
<dbReference type="Gene3D" id="2.60.120.10">
    <property type="entry name" value="Jelly Rolls"/>
    <property type="match status" value="2"/>
</dbReference>
<dbReference type="InterPro" id="IPR050503">
    <property type="entry name" value="cAMP-dep_PK_reg_su-like"/>
</dbReference>
<dbReference type="InterPro" id="IPR012198">
    <property type="entry name" value="cAMP_dep_PK_reg_su"/>
</dbReference>
<dbReference type="InterPro" id="IPR003117">
    <property type="entry name" value="cAMP_dep_PK_reg_su_I/II_a/b"/>
</dbReference>
<dbReference type="InterPro" id="IPR018488">
    <property type="entry name" value="cNMP-bd_CS"/>
</dbReference>
<dbReference type="InterPro" id="IPR000595">
    <property type="entry name" value="cNMP-bd_dom"/>
</dbReference>
<dbReference type="InterPro" id="IPR018490">
    <property type="entry name" value="cNMP-bd_dom_sf"/>
</dbReference>
<dbReference type="InterPro" id="IPR014710">
    <property type="entry name" value="RmlC-like_jellyroll"/>
</dbReference>
<dbReference type="PANTHER" id="PTHR11635">
    <property type="entry name" value="CAMP-DEPENDENT PROTEIN KINASE REGULATORY CHAIN"/>
    <property type="match status" value="1"/>
</dbReference>
<dbReference type="PANTHER" id="PTHR11635:SF156">
    <property type="entry name" value="CAMP-DEPENDENT PROTEIN KINASE TYPE II-BETA REGULATORY SUBUNIT"/>
    <property type="match status" value="1"/>
</dbReference>
<dbReference type="Pfam" id="PF00027">
    <property type="entry name" value="cNMP_binding"/>
    <property type="match status" value="2"/>
</dbReference>
<dbReference type="Pfam" id="PF02197">
    <property type="entry name" value="RIIa"/>
    <property type="match status" value="1"/>
</dbReference>
<dbReference type="PIRSF" id="PIRSF000548">
    <property type="entry name" value="PK_regulatory"/>
    <property type="match status" value="1"/>
</dbReference>
<dbReference type="PRINTS" id="PR00103">
    <property type="entry name" value="CAMPKINASE"/>
</dbReference>
<dbReference type="SMART" id="SM00100">
    <property type="entry name" value="cNMP"/>
    <property type="match status" value="2"/>
</dbReference>
<dbReference type="SMART" id="SM00394">
    <property type="entry name" value="RIIa"/>
    <property type="match status" value="1"/>
</dbReference>
<dbReference type="SUPFAM" id="SSF51206">
    <property type="entry name" value="cAMP-binding domain-like"/>
    <property type="match status" value="2"/>
</dbReference>
<dbReference type="SUPFAM" id="SSF47391">
    <property type="entry name" value="Dimerization-anchoring domain of cAMP-dependent PK regulatory subunit"/>
    <property type="match status" value="1"/>
</dbReference>
<dbReference type="PROSITE" id="PS00888">
    <property type="entry name" value="CNMP_BINDING_1"/>
    <property type="match status" value="2"/>
</dbReference>
<dbReference type="PROSITE" id="PS00889">
    <property type="entry name" value="CNMP_BINDING_2"/>
    <property type="match status" value="2"/>
</dbReference>
<dbReference type="PROSITE" id="PS50042">
    <property type="entry name" value="CNMP_BINDING_3"/>
    <property type="match status" value="2"/>
</dbReference>
<reference key="1">
    <citation type="journal article" date="1988" name="Biochem. Biophys. Res. Commun.">
        <title>Molecular cloning, cDNA structure and deduced amino acid sequence for the hormone-induced regulatory subunit (RII beta) of cAMP-dependent protein kinase from rat ovarian granulosa cells.</title>
        <authorList>
            <person name="Sandberg M."/>
            <person name="Levy F.O."/>
            <person name="Oeyen O."/>
            <person name="Hansson V."/>
            <person name="Jahnsen T."/>
        </authorList>
    </citation>
    <scope>NUCLEOTIDE SEQUENCE [MRNA]</scope>
</reference>
<reference key="2">
    <citation type="journal article" date="1986" name="J. Biol. Chem.">
        <title>Molecular cloning, cDNA structure, and regulation of the regulatory subunit of type II cAMP-dependent protein kinase from rat ovarian granulosa cells.</title>
        <authorList>
            <person name="Jahnsen T."/>
            <person name="Hedin L."/>
            <person name="Kidd V.J."/>
            <person name="Beattie W.G."/>
            <person name="Lohmann S.M."/>
            <person name="Walter U."/>
            <person name="Durica J."/>
            <person name="Schulz T.Z."/>
            <person name="Schiltz E."/>
            <person name="Browner M."/>
            <person name="Lawrence C.B."/>
            <person name="Goldman D."/>
            <person name="Ratoosh S.L."/>
            <person name="Richards J.S."/>
        </authorList>
    </citation>
    <scope>PRELIMINARY NUCLEOTIDE SEQUENCE OF 16-416</scope>
    <source>
        <tissue>Ovarian granulosa cell</tissue>
    </source>
</reference>
<reference key="3">
    <citation type="journal article" date="1988" name="J. Biol. Chem.">
        <authorList>
            <person name="Jahnsen T."/>
            <person name="Hedin L."/>
            <person name="Kidd V.J."/>
            <person name="Beattie W.G."/>
            <person name="Lohmann S.M."/>
            <person name="Walter U."/>
            <person name="Durica J."/>
            <person name="Schulz T.Z."/>
            <person name="Schiltz E."/>
            <person name="Browner M."/>
            <person name="Lawrence C.B."/>
            <person name="Goldman D."/>
            <person name="Ratoosh S.L."/>
            <person name="Richards J.S."/>
        </authorList>
    </citation>
    <scope>ERRATUM OF PUBMED:2427518</scope>
</reference>
<reference key="4">
    <citation type="journal article" date="2006" name="Proc. Natl. Acad. Sci. U.S.A.">
        <title>Quantitative phosphoproteomics of vasopressin-sensitive renal cells: regulation of aquaporin-2 phosphorylation at two sites.</title>
        <authorList>
            <person name="Hoffert J.D."/>
            <person name="Pisitkun T."/>
            <person name="Wang G."/>
            <person name="Shen R.-F."/>
            <person name="Knepper M.A."/>
        </authorList>
    </citation>
    <scope>PHOSPHORYLATION [LARGE SCALE ANALYSIS] AT SER-112</scope>
    <scope>IDENTIFICATION BY MASS SPECTROMETRY [LARGE SCALE ANALYSIS]</scope>
</reference>
<reference key="5">
    <citation type="journal article" date="2011" name="Nat. Cell Biol.">
        <title>Control of PKA stability and signalling by the RING ligase praja2.</title>
        <authorList>
            <person name="Lignitto L."/>
            <person name="Carlucci A."/>
            <person name="Sepe M."/>
            <person name="Stefan E."/>
            <person name="Cuomo O."/>
            <person name="Nistico R."/>
            <person name="Scorziello A."/>
            <person name="Savoia C."/>
            <person name="Garbi C."/>
            <person name="Annunziato L."/>
            <person name="Feliciello A."/>
        </authorList>
    </citation>
    <scope>TISSUE SPECIFICITY</scope>
</reference>
<reference key="6">
    <citation type="journal article" date="2012" name="Nat. Commun.">
        <title>Quantitative maps of protein phosphorylation sites across 14 different rat organs and tissues.</title>
        <authorList>
            <person name="Lundby A."/>
            <person name="Secher A."/>
            <person name="Lage K."/>
            <person name="Nordsborg N.B."/>
            <person name="Dmytriyev A."/>
            <person name="Lundby C."/>
            <person name="Olsen J.V."/>
        </authorList>
    </citation>
    <scope>PHOSPHORYLATION [LARGE SCALE ANALYSIS] AT SER-83; SER-85 AND SER-112</scope>
    <scope>IDENTIFICATION BY MASS SPECTROMETRY [LARGE SCALE ANALYSIS]</scope>
</reference>
<reference key="7">
    <citation type="journal article" date="2001" name="Structure">
        <title>Molecular basis for regulatory subunit diversity in cAMP-dependent protein kinase: crystal structure of the type II beta regulatory subunit.</title>
        <authorList>
            <person name="Diller T.C."/>
            <person name="Madhusudan X."/>
            <person name="Xuong N.H."/>
            <person name="Taylor S.S."/>
        </authorList>
    </citation>
    <scope>X-RAY CRYSTALLOGRAPHY (2.45 ANGSTROMS) OF 112-416</scope>
</reference>
<organism>
    <name type="scientific">Rattus norvegicus</name>
    <name type="common">Rat</name>
    <dbReference type="NCBI Taxonomy" id="10116"/>
    <lineage>
        <taxon>Eukaryota</taxon>
        <taxon>Metazoa</taxon>
        <taxon>Chordata</taxon>
        <taxon>Craniata</taxon>
        <taxon>Vertebrata</taxon>
        <taxon>Euteleostomi</taxon>
        <taxon>Mammalia</taxon>
        <taxon>Eutheria</taxon>
        <taxon>Euarchontoglires</taxon>
        <taxon>Glires</taxon>
        <taxon>Rodentia</taxon>
        <taxon>Myomorpha</taxon>
        <taxon>Muroidea</taxon>
        <taxon>Muridae</taxon>
        <taxon>Murinae</taxon>
        <taxon>Rattus</taxon>
    </lineage>
</organism>
<proteinExistence type="evidence at protein level"/>
<comment type="function">
    <text>Regulatory subunit of the cAMP-dependent protein kinases involved in cAMP signaling in cells. Type II regulatory chains mediate membrane association by binding to anchoring proteins, including the MAP2 kinase.</text>
</comment>
<comment type="subunit">
    <text evidence="2">The inactive form of the enzyme is composed of two regulatory chains and two catalytic chains. Activation by cAMP produces two active catalytic monomers and a regulatory dimer that binds four cAMP molecules. Interacts with PRKACA and PRKACB. Interacts with the phosphorylated form of PJA2. Forms a complex composed of PRKAR2B, GSK3B and GSKIP through GSKIP interaction; facilitates PKA-induced phosphorylation and regulates GSK3B activity.</text>
</comment>
<comment type="interaction">
    <interactant intactId="EBI-6096160">
        <id>P12369</id>
    </interactant>
    <interactant intactId="EBI-5323863">
        <id>Q5S007</id>
        <label>LRRK2</label>
    </interactant>
    <organismsDiffer>true</organismsDiffer>
    <experiments>3</experiments>
</comment>
<comment type="interaction">
    <interactant intactId="EBI-6096160">
        <id>P12369</id>
    </interactant>
    <interactant intactId="EBI-476586">
        <id>P17612</id>
        <label>PRKACA</label>
    </interactant>
    <organismsDiffer>true</organismsDiffer>
    <experiments>2</experiments>
</comment>
<comment type="subcellular location">
    <subcellularLocation>
        <location evidence="1">Cytoplasm</location>
    </subcellularLocation>
    <subcellularLocation>
        <location evidence="1">Cell membrane</location>
    </subcellularLocation>
    <text evidence="1">Colocalizes with PJA2 in the cytoplasm and at the cell membrane.</text>
</comment>
<comment type="tissue specificity">
    <text evidence="4">Four types of regulatory chains are found: I-alpha, I-beta, II-alpha, and II-beta. Their expression varies among tissues and is in some cases constitutive and in others inducible. Brain. Present in a few pyramidal neurons and mostly in mossy fibers. Colocalizes with PJA2 in dentate granule cells and at postsynaptic sites of primary hippocampal neurons.</text>
</comment>
<comment type="PTM">
    <text>Phosphorylated by the activated catalytic chain.</text>
</comment>
<comment type="similarity">
    <text evidence="5">Belongs to the cAMP-dependent kinase regulatory chain family.</text>
</comment>
<sequence length="416" mass="46123">MSIEIPAGLTELLQGFTVEVLRHQPADLLEFALQHFTRLQQENERKGAARFGHEGRTWGDAGAAAGGGTPSKGVNFAEEPMRSDSENGEEEEAAEAGAFNAPVINRFTRRASVCAEAYNPDEEEDDAESRIIHPKTDDQRNRLQEACKDILLFKNLDPEQMSQVLDAMFEKLVKEGEHVIDQGDDGDNFYVIDRGTFDIYVKCDGVGRCVGNYDNRGSFGELALMYNTPRAATITATSPGALWGLDRVTFRRIIVKNNAKKRKMYESFIESLPFLKSLEVSERLKVVDVIGTKVYNDGEQIIAQGDSADSFFIVESGEVRITMKRKGKSDIEENGAVEIARCLRGQYFGELALVTNKPRAASAHAIGTVKCLAMDVQAFERLLGPCMEIMKRNIATYEEQLVALFGTNMDIVEPTA</sequence>
<name>KAP3_RAT</name>
<keyword id="KW-0002">3D-structure</keyword>
<keyword id="KW-0114">cAMP</keyword>
<keyword id="KW-0116">cAMP-binding</keyword>
<keyword id="KW-1003">Cell membrane</keyword>
<keyword id="KW-0963">Cytoplasm</keyword>
<keyword id="KW-0472">Membrane</keyword>
<keyword id="KW-0547">Nucleotide-binding</keyword>
<keyword id="KW-0597">Phosphoprotein</keyword>
<keyword id="KW-1185">Reference proteome</keyword>
<keyword id="KW-0677">Repeat</keyword>
<feature type="chain" id="PRO_0000205392" description="cAMP-dependent protein kinase type II-beta regulatory subunit">
    <location>
        <begin position="1"/>
        <end position="416"/>
    </location>
</feature>
<feature type="region of interest" description="Dimerization and phosphorylation">
    <location>
        <begin position="2"/>
        <end position="151"/>
    </location>
</feature>
<feature type="region of interest" description="Disordered" evidence="3">
    <location>
        <begin position="53"/>
        <end position="97"/>
    </location>
</feature>
<feature type="binding site">
    <location>
        <begin position="152"/>
        <end position="273"/>
    </location>
    <ligand>
        <name>3',5'-cyclic AMP</name>
        <dbReference type="ChEBI" id="CHEBI:58165"/>
        <label>1</label>
    </ligand>
</feature>
<feature type="binding site">
    <location>
        <position position="221"/>
    </location>
    <ligand>
        <name>3',5'-cyclic AMP</name>
        <dbReference type="ChEBI" id="CHEBI:58165"/>
        <label>1</label>
    </ligand>
</feature>
<feature type="binding site">
    <location>
        <position position="230"/>
    </location>
    <ligand>
        <name>3',5'-cyclic AMP</name>
        <dbReference type="ChEBI" id="CHEBI:58165"/>
        <label>1</label>
    </ligand>
</feature>
<feature type="binding site">
    <location>
        <begin position="274"/>
        <end position="416"/>
    </location>
    <ligand>
        <name>3',5'-cyclic AMP</name>
        <dbReference type="ChEBI" id="CHEBI:58165"/>
        <label>2</label>
    </ligand>
</feature>
<feature type="binding site">
    <location>
        <position position="350"/>
    </location>
    <ligand>
        <name>3',5'-cyclic AMP</name>
        <dbReference type="ChEBI" id="CHEBI:58165"/>
        <label>2</label>
    </ligand>
</feature>
<feature type="binding site">
    <location>
        <position position="359"/>
    </location>
    <ligand>
        <name>3',5'-cyclic AMP</name>
        <dbReference type="ChEBI" id="CHEBI:58165"/>
        <label>2</label>
    </ligand>
</feature>
<feature type="modified residue" description="Phosphothreonine" evidence="2">
    <location>
        <position position="69"/>
    </location>
</feature>
<feature type="modified residue" description="Phosphoserine" evidence="7">
    <location>
        <position position="83"/>
    </location>
</feature>
<feature type="modified residue" description="Phosphoserine" evidence="7">
    <location>
        <position position="85"/>
    </location>
</feature>
<feature type="modified residue" description="Phosphoserine" evidence="6 7">
    <location>
        <position position="112"/>
    </location>
</feature>
<feature type="helix" evidence="9">
    <location>
        <begin position="137"/>
        <end position="147"/>
    </location>
</feature>
<feature type="helix" evidence="9">
    <location>
        <begin position="151"/>
        <end position="154"/>
    </location>
</feature>
<feature type="helix" evidence="9">
    <location>
        <begin position="158"/>
        <end position="167"/>
    </location>
</feature>
<feature type="strand" evidence="9">
    <location>
        <begin position="169"/>
        <end position="173"/>
    </location>
</feature>
<feature type="strand" evidence="9">
    <location>
        <begin position="178"/>
        <end position="180"/>
    </location>
</feature>
<feature type="strand" evidence="9">
    <location>
        <begin position="188"/>
        <end position="203"/>
    </location>
</feature>
<feature type="strand" evidence="9">
    <location>
        <begin position="206"/>
        <end position="215"/>
    </location>
</feature>
<feature type="helix" evidence="9">
    <location>
        <begin position="221"/>
        <end position="224"/>
    </location>
</feature>
<feature type="strand" evidence="9">
    <location>
        <begin position="231"/>
        <end position="246"/>
    </location>
</feature>
<feature type="helix" evidence="9">
    <location>
        <begin position="247"/>
        <end position="259"/>
    </location>
</feature>
<feature type="helix" evidence="8">
    <location>
        <begin position="273"/>
        <end position="275"/>
    </location>
</feature>
<feature type="strand" evidence="10">
    <location>
        <begin position="276"/>
        <end position="278"/>
    </location>
</feature>
<feature type="helix" evidence="8">
    <location>
        <begin position="280"/>
        <end position="289"/>
    </location>
</feature>
<feature type="strand" evidence="8">
    <location>
        <begin position="291"/>
        <end position="295"/>
    </location>
</feature>
<feature type="strand" evidence="8">
    <location>
        <begin position="300"/>
        <end position="302"/>
    </location>
</feature>
<feature type="strand" evidence="8">
    <location>
        <begin position="310"/>
        <end position="324"/>
    </location>
</feature>
<feature type="strand" evidence="8">
    <location>
        <begin position="336"/>
        <end position="342"/>
    </location>
</feature>
<feature type="strand" evidence="8">
    <location>
        <begin position="347"/>
        <end position="349"/>
    </location>
</feature>
<feature type="helix" evidence="8">
    <location>
        <begin position="351"/>
        <end position="355"/>
    </location>
</feature>
<feature type="strand" evidence="8">
    <location>
        <begin position="360"/>
        <end position="375"/>
    </location>
</feature>
<feature type="helix" evidence="8">
    <location>
        <begin position="376"/>
        <end position="382"/>
    </location>
</feature>
<feature type="helix" evidence="8">
    <location>
        <begin position="384"/>
        <end position="386"/>
    </location>
</feature>
<feature type="helix" evidence="8">
    <location>
        <begin position="387"/>
        <end position="405"/>
    </location>
</feature>
<protein>
    <recommendedName>
        <fullName>cAMP-dependent protein kinase type II-beta regulatory subunit</fullName>
    </recommendedName>
</protein>
<accession>P12369</accession>
<evidence type="ECO:0000250" key="1"/>
<evidence type="ECO:0000250" key="2">
    <source>
        <dbReference type="UniProtKB" id="P31323"/>
    </source>
</evidence>
<evidence type="ECO:0000256" key="3">
    <source>
        <dbReference type="SAM" id="MobiDB-lite"/>
    </source>
</evidence>
<evidence type="ECO:0000269" key="4">
    <source>
    </source>
</evidence>
<evidence type="ECO:0000305" key="5"/>
<evidence type="ECO:0007744" key="6">
    <source>
    </source>
</evidence>
<evidence type="ECO:0007744" key="7">
    <source>
    </source>
</evidence>
<evidence type="ECO:0007829" key="8">
    <source>
        <dbReference type="PDB" id="1CX4"/>
    </source>
</evidence>
<evidence type="ECO:0007829" key="9">
    <source>
        <dbReference type="PDB" id="3IDB"/>
    </source>
</evidence>
<evidence type="ECO:0007829" key="10">
    <source>
        <dbReference type="PDB" id="4JVA"/>
    </source>
</evidence>